<dbReference type="EMBL" id="CP017627">
    <property type="protein sequence ID" value="AOW29614.1"/>
    <property type="molecule type" value="Genomic_DNA"/>
</dbReference>
<dbReference type="RefSeq" id="XP_714605.2">
    <property type="nucleotide sequence ID" value="XM_709512.2"/>
</dbReference>
<dbReference type="SMR" id="A0A1D8PN96"/>
<dbReference type="FunCoup" id="A0A1D8PN96">
    <property type="interactions" value="3570"/>
</dbReference>
<dbReference type="STRING" id="237561.A0A1D8PN96"/>
<dbReference type="EnsemblFungi" id="C5_01840C_A-T">
    <property type="protein sequence ID" value="C5_01840C_A-T-p1"/>
    <property type="gene ID" value="C5_01840C_A"/>
</dbReference>
<dbReference type="GeneID" id="3643755"/>
<dbReference type="KEGG" id="cal:CAALFM_C501840CA"/>
<dbReference type="CGD" id="CAL0000189501">
    <property type="gene designation" value="TAC1"/>
</dbReference>
<dbReference type="VEuPathDB" id="FungiDB:C5_01840C_A"/>
<dbReference type="eggNOG" id="ENOG502QZJZ">
    <property type="taxonomic scope" value="Eukaryota"/>
</dbReference>
<dbReference type="InParanoid" id="A0A1D8PN96"/>
<dbReference type="OrthoDB" id="2123952at2759"/>
<dbReference type="Proteomes" id="UP000000559">
    <property type="component" value="Chromosome 5"/>
</dbReference>
<dbReference type="GO" id="GO:0005634">
    <property type="term" value="C:nucleus"/>
    <property type="evidence" value="ECO:0000314"/>
    <property type="project" value="CGD"/>
</dbReference>
<dbReference type="GO" id="GO:0005667">
    <property type="term" value="C:transcription regulator complex"/>
    <property type="evidence" value="ECO:0000314"/>
    <property type="project" value="CGD"/>
</dbReference>
<dbReference type="GO" id="GO:0003677">
    <property type="term" value="F:DNA binding"/>
    <property type="evidence" value="ECO:0000314"/>
    <property type="project" value="CGD"/>
</dbReference>
<dbReference type="GO" id="GO:0001216">
    <property type="term" value="F:DNA-binding transcription activator activity"/>
    <property type="evidence" value="ECO:0000314"/>
    <property type="project" value="CGD"/>
</dbReference>
<dbReference type="GO" id="GO:0000981">
    <property type="term" value="F:DNA-binding transcription factor activity, RNA polymerase II-specific"/>
    <property type="evidence" value="ECO:0000314"/>
    <property type="project" value="CGD"/>
</dbReference>
<dbReference type="GO" id="GO:0000978">
    <property type="term" value="F:RNA polymerase II cis-regulatory region sequence-specific DNA binding"/>
    <property type="evidence" value="ECO:0000315"/>
    <property type="project" value="CGD"/>
</dbReference>
<dbReference type="GO" id="GO:0043565">
    <property type="term" value="F:sequence-specific DNA binding"/>
    <property type="evidence" value="ECO:0000318"/>
    <property type="project" value="GO_Central"/>
</dbReference>
<dbReference type="GO" id="GO:0003713">
    <property type="term" value="F:transcription coactivator activity"/>
    <property type="evidence" value="ECO:0000315"/>
    <property type="project" value="CGD"/>
</dbReference>
<dbReference type="GO" id="GO:0008270">
    <property type="term" value="F:zinc ion binding"/>
    <property type="evidence" value="ECO:0007669"/>
    <property type="project" value="InterPro"/>
</dbReference>
<dbReference type="GO" id="GO:0034599">
    <property type="term" value="P:cellular response to oxidative stress"/>
    <property type="evidence" value="ECO:0000315"/>
    <property type="project" value="CGD"/>
</dbReference>
<dbReference type="GO" id="GO:0071383">
    <property type="term" value="P:cellular response to steroid hormone stimulus"/>
    <property type="evidence" value="ECO:0000270"/>
    <property type="project" value="CGD"/>
</dbReference>
<dbReference type="GO" id="GO:0006351">
    <property type="term" value="P:DNA-templated transcription"/>
    <property type="evidence" value="ECO:0007669"/>
    <property type="project" value="InterPro"/>
</dbReference>
<dbReference type="GO" id="GO:0030447">
    <property type="term" value="P:filamentous growth"/>
    <property type="evidence" value="ECO:0000315"/>
    <property type="project" value="CGD"/>
</dbReference>
<dbReference type="GO" id="GO:0036180">
    <property type="term" value="P:filamentous growth of a population of unicellular organisms in response to biotic stimulus"/>
    <property type="evidence" value="ECO:0000315"/>
    <property type="project" value="CGD"/>
</dbReference>
<dbReference type="GO" id="GO:1900445">
    <property type="term" value="P:positive regulation of filamentous growth of a population of unicellular organisms in response to biotic stimulus"/>
    <property type="evidence" value="ECO:0000315"/>
    <property type="project" value="CGD"/>
</dbReference>
<dbReference type="GO" id="GO:0045944">
    <property type="term" value="P:positive regulation of transcription by RNA polymerase II"/>
    <property type="evidence" value="ECO:0000318"/>
    <property type="project" value="GO_Central"/>
</dbReference>
<dbReference type="GO" id="GO:2001038">
    <property type="term" value="P:regulation of cellular response to drug"/>
    <property type="evidence" value="ECO:0000315"/>
    <property type="project" value="CGD"/>
</dbReference>
<dbReference type="GO" id="GO:0006357">
    <property type="term" value="P:regulation of transcription by RNA polymerase II"/>
    <property type="evidence" value="ECO:0000315"/>
    <property type="project" value="CGD"/>
</dbReference>
<dbReference type="CDD" id="cd12148">
    <property type="entry name" value="fungal_TF_MHR"/>
    <property type="match status" value="1"/>
</dbReference>
<dbReference type="CDD" id="cd00067">
    <property type="entry name" value="GAL4"/>
    <property type="match status" value="1"/>
</dbReference>
<dbReference type="FunFam" id="4.10.240.10:FF:000076">
    <property type="entry name" value="Tac1p"/>
    <property type="match status" value="1"/>
</dbReference>
<dbReference type="Gene3D" id="4.10.240.10">
    <property type="entry name" value="Zn(2)-C6 fungal-type DNA-binding domain"/>
    <property type="match status" value="1"/>
</dbReference>
<dbReference type="InterPro" id="IPR050987">
    <property type="entry name" value="AtrR-like"/>
</dbReference>
<dbReference type="InterPro" id="IPR007219">
    <property type="entry name" value="Transcription_factor_dom_fun"/>
</dbReference>
<dbReference type="InterPro" id="IPR036864">
    <property type="entry name" value="Zn2-C6_fun-type_DNA-bd_sf"/>
</dbReference>
<dbReference type="InterPro" id="IPR001138">
    <property type="entry name" value="Zn2Cys6_DnaBD"/>
</dbReference>
<dbReference type="PANTHER" id="PTHR46910">
    <property type="entry name" value="TRANSCRIPTION FACTOR PDR1"/>
    <property type="match status" value="1"/>
</dbReference>
<dbReference type="PANTHER" id="PTHR46910:SF37">
    <property type="entry name" value="ZN(II)2CYS6 TRANSCRIPTION FACTOR (EUROFUNG)"/>
    <property type="match status" value="1"/>
</dbReference>
<dbReference type="Pfam" id="PF04082">
    <property type="entry name" value="Fungal_trans"/>
    <property type="match status" value="1"/>
</dbReference>
<dbReference type="Pfam" id="PF00172">
    <property type="entry name" value="Zn_clus"/>
    <property type="match status" value="1"/>
</dbReference>
<dbReference type="SMART" id="SM00906">
    <property type="entry name" value="Fungal_trans"/>
    <property type="match status" value="1"/>
</dbReference>
<dbReference type="SMART" id="SM00066">
    <property type="entry name" value="GAL4"/>
    <property type="match status" value="1"/>
</dbReference>
<dbReference type="SUPFAM" id="SSF57701">
    <property type="entry name" value="Zn2/Cys6 DNA-binding domain"/>
    <property type="match status" value="1"/>
</dbReference>
<dbReference type="PROSITE" id="PS00463">
    <property type="entry name" value="ZN2_CY6_FUNGAL_1"/>
    <property type="match status" value="1"/>
</dbReference>
<dbReference type="PROSITE" id="PS50048">
    <property type="entry name" value="ZN2_CY6_FUNGAL_2"/>
    <property type="match status" value="1"/>
</dbReference>
<reference key="1">
    <citation type="journal article" date="2004" name="Proc. Natl. Acad. Sci. U.S.A.">
        <title>The diploid genome sequence of Candida albicans.</title>
        <authorList>
            <person name="Jones T."/>
            <person name="Federspiel N.A."/>
            <person name="Chibana H."/>
            <person name="Dungan J."/>
            <person name="Kalman S."/>
            <person name="Magee B.B."/>
            <person name="Newport G."/>
            <person name="Thorstenson Y.R."/>
            <person name="Agabian N."/>
            <person name="Magee P.T."/>
            <person name="Davis R.W."/>
            <person name="Scherer S."/>
        </authorList>
    </citation>
    <scope>NUCLEOTIDE SEQUENCE [LARGE SCALE GENOMIC DNA]</scope>
    <source>
        <strain>SC5314 / ATCC MYA-2876</strain>
    </source>
</reference>
<reference key="2">
    <citation type="journal article" date="2007" name="Genome Biol.">
        <title>Assembly of the Candida albicans genome into sixteen supercontigs aligned on the eight chromosomes.</title>
        <authorList>
            <person name="van het Hoog M."/>
            <person name="Rast T.J."/>
            <person name="Martchenko M."/>
            <person name="Grindle S."/>
            <person name="Dignard D."/>
            <person name="Hogues H."/>
            <person name="Cuomo C."/>
            <person name="Berriman M."/>
            <person name="Scherer S."/>
            <person name="Magee B.B."/>
            <person name="Whiteway M."/>
            <person name="Chibana H."/>
            <person name="Nantel A."/>
            <person name="Magee P.T."/>
        </authorList>
    </citation>
    <scope>GENOME REANNOTATION</scope>
    <source>
        <strain>SC5314 / ATCC MYA-2876</strain>
    </source>
</reference>
<reference key="3">
    <citation type="journal article" date="2013" name="Genome Biol.">
        <title>Assembly of a phased diploid Candida albicans genome facilitates allele-specific measurements and provides a simple model for repeat and indel structure.</title>
        <authorList>
            <person name="Muzzey D."/>
            <person name="Schwartz K."/>
            <person name="Weissman J.S."/>
            <person name="Sherlock G."/>
        </authorList>
    </citation>
    <scope>NUCLEOTIDE SEQUENCE [LARGE SCALE GENOMIC DNA]</scope>
    <scope>GENOME REANNOTATION</scope>
    <source>
        <strain>SC5314 / ATCC MYA-2876</strain>
    </source>
</reference>
<reference key="4">
    <citation type="journal article" date="2004" name="Eukaryot. Cell">
        <title>TAC1, transcriptional activator of CDR genes, is a new transcription factor involved in the regulation of Candida albicans ABC transporters CDR1 and CDR2.</title>
        <authorList>
            <person name="Coste A.T."/>
            <person name="Karababa M."/>
            <person name="Ischer F."/>
            <person name="Bille J."/>
            <person name="Sanglard D."/>
        </authorList>
    </citation>
    <scope>FUNCTION</scope>
    <scope>DISRUPTION PHENOTYPE</scope>
    <scope>SUBCELLULAR LOCATION</scope>
    <scope>DNA-BINDING</scope>
</reference>
<reference key="5">
    <citation type="journal article" date="2007" name="Eukaryot. Cell">
        <title>Genome-wide expression and location analyses of the Candida albicans Tac1p regulon.</title>
        <authorList>
            <person name="Liu T.T."/>
            <person name="Znaidi S."/>
            <person name="Barker K.S."/>
            <person name="Xu L."/>
            <person name="Homayouni R."/>
            <person name="Saidane S."/>
            <person name="Morschhaeuser J."/>
            <person name="Nantel A."/>
            <person name="Raymond M."/>
            <person name="Rogers P.D."/>
        </authorList>
    </citation>
    <scope>FUNCTION</scope>
</reference>
<reference key="6">
    <citation type="journal article" date="2009" name="Eukaryot. Cell">
        <title>Functional analysis of cis- and trans-acting elements of the Candida albicans CDR2 promoter with a novel promoter reporter system.</title>
        <authorList>
            <person name="Coste A.T."/>
            <person name="Crittin J."/>
            <person name="Bauser C."/>
            <person name="Rohde B."/>
            <person name="Sanglard D."/>
        </authorList>
    </citation>
    <scope>FUNCTION</scope>
    <scope>SUBCELLULAR LOCATION</scope>
    <scope>DNA-BINDING</scope>
    <scope>MUTAGENESIS OF THR-225; TRP-239; GLU-461; ARG-673; ARG-693; ALA-736; HIS-741; ILE-794; GLU-841; ASN-972 AND GLY-980</scope>
</reference>
<reference key="7">
    <citation type="journal article" date="2018" name="Antimicrob. Agents Chemother.">
        <title>Candida albicans Zn cluster transcription factors Tac1 and Znc1 are activated by farnesol to upregulate a transcriptional program including the multidrug efflux pump CDR1.</title>
        <authorList>
            <person name="Liu Z."/>
            <person name="Rossi J.M."/>
            <person name="Myers L.C."/>
        </authorList>
    </citation>
    <scope>FUNCTION</scope>
    <scope>ACTIVITY REGULATION</scope>
    <scope>PHOSPHORYLATION</scope>
</reference>
<sequence>MDTSSSSGTHPSTFNNLTKQQELTGNDPNDTNRKRIRVACDSCRRKKIKCNGSYPCGNCIQAKNTSNCHFTERPVRKKLKPTKQDNKSTANSNGVSKRKYNDTFSGNSINIKTEKQENTTFGINDNKSSDLESRLSRIENSMSRMMHTLENFSQNFMTQAIRNNHSNSSMFNNNSLSPTPSEDFNKSAFDSEEQQTSHSYKNLKDRVKDANELLKLRNWDEFVGTHSITCIFSRESLDWMEKTLGSYGEEYLTPIRNLPLVFHSELKPYIMKWIDPPVVDKLQRKKLLESPFPTDSKLISKLIDLYYEETSMINILVDESRVRSLFAAYYNNFAEPIATKRRRFKLSELLLMTSILLISLSCLTEDDFSEERITTPASSTSSNYSAASANLLGDYNKNRLIALQNSLENSAIFYYHRISVISEGLETVEALLMFIIYVESNWLTSFFNYTIITVTIRFAQEIGLHRAETYNNLDLEEATKRRKIWWFCYFFDIEFSFKSGKPPVINTNDVTTNSDEDLLRVITQLKQYGPLSPKDRMYSPVCHTISTSLLDLSGSDSICLDILKIIQSGDILDDPFYFQFCALLQSRIRSNSYHDLFIASAEKRDFSSISNTLEKLNADMFELAMYLADEAKPRFYNDPKFTSVQASTGTSIRRDTILAMKLTFFSHLMIINRYPLMIATEDSKFDDRVIKFRNLSLDSARTILMLIKGWHRESASALFYNWAIYFPVAAYLVLVAAIINHPQLPESGTNLNLLIETSLSFFKSSKQWNSSNDSQDKQQNSTICVNKIVAIELIVRLMLRVVIKVYELHNNVEILANNPALQNHLQEAEEKFPDIFQNHAEFTSKMIALVGASPFGGCGSRNTSSCNLRDNSTNHGQNNMNPSPTITNNTYNSNINTGSNSTGEPQVCYAQSPSYNASLSNIINNESTGRSPATSTSINQSMMNENYDLFNDYLIDNSAVNLPFSQFNNLPNFFFDNNLGI</sequence>
<organism>
    <name type="scientific">Candida albicans (strain SC5314 / ATCC MYA-2876)</name>
    <name type="common">Yeast</name>
    <dbReference type="NCBI Taxonomy" id="237561"/>
    <lineage>
        <taxon>Eukaryota</taxon>
        <taxon>Fungi</taxon>
        <taxon>Dikarya</taxon>
        <taxon>Ascomycota</taxon>
        <taxon>Saccharomycotina</taxon>
        <taxon>Pichiomycetes</taxon>
        <taxon>Debaryomycetaceae</taxon>
        <taxon>Candida/Lodderomyces clade</taxon>
        <taxon>Candida</taxon>
    </lineage>
</organism>
<protein>
    <recommendedName>
        <fullName evidence="7">Transcription factor TAC1</fullName>
    </recommendedName>
    <alternativeName>
        <fullName evidence="7">Transcriptional activator of CDR genes 1</fullName>
    </alternativeName>
    <alternativeName>
        <fullName evidence="7">Zn(2)-Cys(6) DNA-binding domains containing protein 2</fullName>
    </alternativeName>
</protein>
<gene>
    <name evidence="7" type="primary">TAC1</name>
    <name evidence="7" type="synonym">ZNC2</name>
    <name type="ordered locus">CAALFM_C501840CA</name>
    <name type="ordered locus">orf19.10700</name>
</gene>
<accession>A0A1D8PN96</accession>
<keyword id="KW-0238">DNA-binding</keyword>
<keyword id="KW-0479">Metal-binding</keyword>
<keyword id="KW-0539">Nucleus</keyword>
<keyword id="KW-1185">Reference proteome</keyword>
<keyword id="KW-0804">Transcription</keyword>
<keyword id="KW-0805">Transcription regulation</keyword>
<evidence type="ECO:0000255" key="1">
    <source>
        <dbReference type="PROSITE-ProRule" id="PRU00227"/>
    </source>
</evidence>
<evidence type="ECO:0000256" key="2">
    <source>
        <dbReference type="SAM" id="MobiDB-lite"/>
    </source>
</evidence>
<evidence type="ECO:0000269" key="3">
    <source>
    </source>
</evidence>
<evidence type="ECO:0000269" key="4">
    <source>
    </source>
</evidence>
<evidence type="ECO:0000269" key="5">
    <source>
    </source>
</evidence>
<evidence type="ECO:0000269" key="6">
    <source>
    </source>
</evidence>
<evidence type="ECO:0000303" key="7">
    <source>
    </source>
</evidence>
<name>TAC1_CANAL</name>
<comment type="function">
    <text evidence="3 4 5 6">Transcriptional activator of drug-responsive genes including the ABC-type transporters CDR1 and CDR2, as well as HSP12 and RTA3 (PubMed:15590837, PubMed:17905926, PubMed:19561319, PubMed:30104273). Binds the cis-acting regulatory drug-responsive elements (DREs) with the consensus sequence 5'-CGGAWATCGGATATTTTTTT-3' in the promoters of target genes (PubMed:15590837, PubMed:19561319).</text>
</comment>
<comment type="activity regulation">
    <text evidence="6">Drugs such as farnesol and 1-dodecanol are able to hyperactivate TAC1 probably via phosphorylation by the Mediator complex.</text>
</comment>
<comment type="subcellular location">
    <subcellularLocation>
        <location evidence="1 3 5">Nucleus</location>
    </subcellularLocation>
</comment>
<comment type="PTM">
    <text evidence="6">Phosphorylated (PubMed:30104273). Phosphorylation leads to hyperactivation (PubMed:30104273).</text>
</comment>
<comment type="disruption phenotype">
    <text evidence="3">Impairs increased CDR1 and CDR2 up-regulation after fluphenazine exposure (PubMed:15590837). Increases susceptibility to fluphenazine, fluconazole, and terbinafine (PubMed:15590837). Does not affect susceptibility to flucytosine or caspofungin, two antifungal agents that are not considered to be substrates of CDR1 and CDR2 (PubMed:15590837).</text>
</comment>
<feature type="chain" id="PRO_0000459221" description="Transcription factor TAC1">
    <location>
        <begin position="1"/>
        <end position="981"/>
    </location>
</feature>
<feature type="DNA-binding region" description="Zn(2)-C6 fungal-type" evidence="1">
    <location>
        <begin position="40"/>
        <end position="68"/>
    </location>
</feature>
<feature type="region of interest" description="Disordered" evidence="2">
    <location>
        <begin position="1"/>
        <end position="33"/>
    </location>
</feature>
<feature type="region of interest" description="Disordered" evidence="2">
    <location>
        <begin position="74"/>
        <end position="106"/>
    </location>
</feature>
<feature type="region of interest" description="Disordered" evidence="2">
    <location>
        <begin position="165"/>
        <end position="199"/>
    </location>
</feature>
<feature type="region of interest" description="Disordered" evidence="2">
    <location>
        <begin position="868"/>
        <end position="902"/>
    </location>
</feature>
<feature type="compositionally biased region" description="Polar residues" evidence="2">
    <location>
        <begin position="1"/>
        <end position="29"/>
    </location>
</feature>
<feature type="compositionally biased region" description="Low complexity" evidence="2">
    <location>
        <begin position="165"/>
        <end position="177"/>
    </location>
</feature>
<feature type="compositionally biased region" description="Polar residues" evidence="2">
    <location>
        <begin position="868"/>
        <end position="880"/>
    </location>
</feature>
<feature type="compositionally biased region" description="Low complexity" evidence="2">
    <location>
        <begin position="881"/>
        <end position="902"/>
    </location>
</feature>
<feature type="mutagenesis site" description="Gain of function (GOF) mutation that leads to hyperactivity conferring constitutive high CDR1 and CDR2 expression." evidence="5">
    <original>T</original>
    <variation>A</variation>
    <location>
        <position position="225"/>
    </location>
</feature>
<feature type="mutagenesis site" description="Gain of function (GOF) mutation that leads to hyperactivity conferring constitutive high CDR1 and CDR2 expression." evidence="5">
    <original>W</original>
    <variation>L</variation>
    <location>
        <position position="239"/>
    </location>
</feature>
<feature type="mutagenesis site" description="Gain of function (GOF) mutation that leads to hyperactivity conferring constitutive high CDR1 and CDR2 expression." evidence="5">
    <original>E</original>
    <variation>K</variation>
    <location>
        <position position="461"/>
    </location>
</feature>
<feature type="mutagenesis site" description="Gain of function (GOF) mutation that leads to hyperactivity conferring constitutive high CDR1 and CDR2 expression." evidence="5">
    <original>R</original>
    <variation>Q</variation>
    <location>
        <position position="673"/>
    </location>
</feature>
<feature type="mutagenesis site" description="Gain of function (GOF) mutation that leads to hyperactivity conferring constitutive high CDR1 and CDR2 expression." evidence="5">
    <original>R</original>
    <variation>K</variation>
    <location>
        <position position="693"/>
    </location>
</feature>
<feature type="mutagenesis site" description="Gain of function (GOF) mutation that leads to hyperactivity conferring constitutive high CDR1 and CDR2 expression." evidence="5">
    <original>A</original>
    <variation>V</variation>
    <variation>T</variation>
    <location>
        <position position="736"/>
    </location>
</feature>
<feature type="mutagenesis site" description="Gain of function (GOF) mutation that leads to hyperactivity conferring constitutive high CDR1 and CDR2 expression." evidence="5">
    <original>H</original>
    <variation>Y</variation>
    <location>
        <position position="741"/>
    </location>
</feature>
<feature type="mutagenesis site" description="Gain of function (GOF) mutation that leads to hyperactivity conferring constitutive high CDR1 and CDR2 expression." evidence="5">
    <original>I</original>
    <variation>V</variation>
    <location>
        <position position="794"/>
    </location>
</feature>
<feature type="mutagenesis site" description="Gain of function (GOF) mutation that leads to hyperactivity conferring constitutive high CDR1 and CDR2 expression." evidence="5">
    <original>E</original>
    <variation>G</variation>
    <location>
        <position position="841"/>
    </location>
</feature>
<feature type="mutagenesis site" description="Gain of function (GOF) mutation that leads to hyperactivity conferring constitutive high CDR1 and CDR2 expression." evidence="5">
    <original>N</original>
    <variation>D</variation>
    <variation>I</variation>
    <variation>S</variation>
    <location>
        <position position="972"/>
    </location>
</feature>
<feature type="mutagenesis site" description="Gain of function (GOF) mutation that leads to hyperactivity conferring constitutive high CDR1 and CDR2 expression." evidence="5">
    <original>G</original>
    <variation>E</variation>
    <variation>W</variation>
    <location>
        <position position="980"/>
    </location>
</feature>
<proteinExistence type="evidence at protein level"/>